<feature type="chain" id="PRO_0000394237" description="BTB/POZ domain-containing protein 18">
    <location>
        <begin position="1"/>
        <end position="712"/>
    </location>
</feature>
<feature type="domain" description="BTB" evidence="2">
    <location>
        <begin position="34"/>
        <end position="102"/>
    </location>
</feature>
<feature type="region of interest" description="Disordered" evidence="3">
    <location>
        <begin position="157"/>
        <end position="176"/>
    </location>
</feature>
<feature type="region of interest" description="Disordered" evidence="3">
    <location>
        <begin position="212"/>
        <end position="355"/>
    </location>
</feature>
<feature type="region of interest" description="Disordered" evidence="3">
    <location>
        <begin position="374"/>
        <end position="410"/>
    </location>
</feature>
<feature type="region of interest" description="Disordered" evidence="3">
    <location>
        <begin position="653"/>
        <end position="676"/>
    </location>
</feature>
<feature type="region of interest" description="Disordered" evidence="3">
    <location>
        <begin position="691"/>
        <end position="712"/>
    </location>
</feature>
<feature type="compositionally biased region" description="Polar residues" evidence="3">
    <location>
        <begin position="218"/>
        <end position="228"/>
    </location>
</feature>
<feature type="compositionally biased region" description="Basic and acidic residues" evidence="3">
    <location>
        <begin position="229"/>
        <end position="238"/>
    </location>
</feature>
<feature type="compositionally biased region" description="Low complexity" evidence="3">
    <location>
        <begin position="277"/>
        <end position="288"/>
    </location>
</feature>
<feature type="compositionally biased region" description="Basic and acidic residues" evidence="3">
    <location>
        <begin position="303"/>
        <end position="313"/>
    </location>
</feature>
<feature type="compositionally biased region" description="Polar residues" evidence="3">
    <location>
        <begin position="396"/>
        <end position="410"/>
    </location>
</feature>
<feature type="compositionally biased region" description="Acidic residues" evidence="3">
    <location>
        <begin position="702"/>
        <end position="712"/>
    </location>
</feature>
<feature type="modified residue" description="Phosphoserine" evidence="1">
    <location>
        <position position="420"/>
    </location>
</feature>
<feature type="modified residue" description="Phosphoserine" evidence="1">
    <location>
        <position position="671"/>
    </location>
</feature>
<feature type="modified residue" description="Phosphoserine" evidence="1">
    <location>
        <position position="672"/>
    </location>
</feature>
<feature type="sequence variant" id="VAR_063155" description="In dbSNP:rs78162678.">
    <original>S</original>
    <variation>T</variation>
    <location>
        <position position="302"/>
    </location>
</feature>
<feature type="sequence variant" id="VAR_063156" description="In dbSNP:rs201912857.">
    <original>E</original>
    <variation>G</variation>
    <location>
        <position position="352"/>
    </location>
</feature>
<proteinExistence type="evidence at protein level"/>
<gene>
    <name evidence="5" type="primary">BTBD18</name>
</gene>
<comment type="function">
    <text evidence="1">Specifically required during spermatogenesis to promote expression of piRNA precursors. The piRNA metabolic process mediates the repression of transposable elements during meiosis by forming complexes composed of piRNAs and Piwi proteins and governs the methylation and subsequent repression of transposons, which is essential for the germline integrity. Acts by facilitating transcription elongation at piRNA loci during pachytene.</text>
</comment>
<comment type="interaction">
    <interactant intactId="EBI-18298734">
        <id>B2RXH4</id>
    </interactant>
    <interactant intactId="EBI-398874">
        <id>Q9UBU9</id>
        <label>NXF1</label>
    </interactant>
    <organismsDiffer>false</organismsDiffer>
    <experiments>3</experiments>
</comment>
<comment type="subcellular location">
    <subcellularLocation>
        <location evidence="1">Nucleus</location>
    </subcellularLocation>
</comment>
<reference key="1">
    <citation type="journal article" date="2006" name="Nature">
        <title>Human chromosome 11 DNA sequence and analysis including novel gene identification.</title>
        <authorList>
            <person name="Taylor T.D."/>
            <person name="Noguchi H."/>
            <person name="Totoki Y."/>
            <person name="Toyoda A."/>
            <person name="Kuroki Y."/>
            <person name="Dewar K."/>
            <person name="Lloyd C."/>
            <person name="Itoh T."/>
            <person name="Takeda T."/>
            <person name="Kim D.-W."/>
            <person name="She X."/>
            <person name="Barlow K.F."/>
            <person name="Bloom T."/>
            <person name="Bruford E."/>
            <person name="Chang J.L."/>
            <person name="Cuomo C.A."/>
            <person name="Eichler E."/>
            <person name="FitzGerald M.G."/>
            <person name="Jaffe D.B."/>
            <person name="LaButti K."/>
            <person name="Nicol R."/>
            <person name="Park H.-S."/>
            <person name="Seaman C."/>
            <person name="Sougnez C."/>
            <person name="Yang X."/>
            <person name="Zimmer A.R."/>
            <person name="Zody M.C."/>
            <person name="Birren B.W."/>
            <person name="Nusbaum C."/>
            <person name="Fujiyama A."/>
            <person name="Hattori M."/>
            <person name="Rogers J."/>
            <person name="Lander E.S."/>
            <person name="Sakaki Y."/>
        </authorList>
    </citation>
    <scope>NUCLEOTIDE SEQUENCE [LARGE SCALE GENOMIC DNA]</scope>
</reference>
<reference key="2">
    <citation type="submission" date="2005-07" db="EMBL/GenBank/DDBJ databases">
        <authorList>
            <person name="Mural R.J."/>
            <person name="Istrail S."/>
            <person name="Sutton G.G."/>
            <person name="Florea L."/>
            <person name="Halpern A.L."/>
            <person name="Mobarry C.M."/>
            <person name="Lippert R."/>
            <person name="Walenz B."/>
            <person name="Shatkay H."/>
            <person name="Dew I."/>
            <person name="Miller J.R."/>
            <person name="Flanigan M.J."/>
            <person name="Edwards N.J."/>
            <person name="Bolanos R."/>
            <person name="Fasulo D."/>
            <person name="Halldorsson B.V."/>
            <person name="Hannenhalli S."/>
            <person name="Turner R."/>
            <person name="Yooseph S."/>
            <person name="Lu F."/>
            <person name="Nusskern D.R."/>
            <person name="Shue B.C."/>
            <person name="Zheng X.H."/>
            <person name="Zhong F."/>
            <person name="Delcher A.L."/>
            <person name="Huson D.H."/>
            <person name="Kravitz S.A."/>
            <person name="Mouchard L."/>
            <person name="Reinert K."/>
            <person name="Remington K.A."/>
            <person name="Clark A.G."/>
            <person name="Waterman M.S."/>
            <person name="Eichler E.E."/>
            <person name="Adams M.D."/>
            <person name="Hunkapiller M.W."/>
            <person name="Myers E.W."/>
            <person name="Venter J.C."/>
        </authorList>
    </citation>
    <scope>NUCLEOTIDE SEQUENCE [LARGE SCALE GENOMIC DNA]</scope>
</reference>
<reference key="3">
    <citation type="journal article" date="2004" name="Genome Res.">
        <title>The status, quality, and expansion of the NIH full-length cDNA project: the Mammalian Gene Collection (MGC).</title>
        <authorList>
            <consortium name="The MGC Project Team"/>
        </authorList>
    </citation>
    <scope>NUCLEOTIDE SEQUENCE [LARGE SCALE MRNA]</scope>
</reference>
<sequence length="712" mass="77931">MCSPASPKILYRNPRFLRLAFLQLHHQQQSDVFCDVLLQAEGEAVPAHCCILSACSPFFTERLERERPAQGGKVVLELGGLKISTLRKLVDFLYTSEMEVSQEEAQDVLSAARQLRVSELESLQLEGGKLVKAPQGRRLNRECLQPTSAAPISARVVTPSHHPHTPLPTNQTPCPLGAIRLKSLGKEEGPQENNRQNADNLSGTLLLKRKARACPTPQEKNSSPSSHSQEPRENKNDTALDPTVLSPPSLYPSVDKHLLPRKIRLSRSKPSPGICTSKPSSILSGSSSVPATPGRRLWRQRSVNKETPEDKPKPGRASPLQSTPNPSGLGKTGGSRKRSPEVRAPNSDSAEEGQVGRVKLRKIVNGTCWEVVQETPLKNTQDSPQIPDPGGDFQEPSGTQPFSSNEQEMSPTRTELCQDSPMCTKLQDILVSASHSPDHPVVKSEFESSPELVEKEPMLAIDCREPYAFDTALLEQPCEAEEYRITSAAATSELEEILDFMLCGSDIEPPIGSLESPGAEGCRTPTYHLTETGKNWIEGEEWCLPDMELWPRELTELEKEPAGENRGPTELLSPLVMPSEVSEVLSVGGRWTPDLEITSSQPLDGQEDKLLHVSSLDTPQRSYGDLSPPCSNWVETGLEVSLTTDELLYPSPKAGKEVSGHSELLGSLPASSEEEEIDVVDWTAEGRLVPTTVPSVWPDPSSESETEVDILT</sequence>
<protein>
    <recommendedName>
        <fullName evidence="4">BTB/POZ domain-containing protein 18</fullName>
    </recommendedName>
</protein>
<organism>
    <name type="scientific">Homo sapiens</name>
    <name type="common">Human</name>
    <dbReference type="NCBI Taxonomy" id="9606"/>
    <lineage>
        <taxon>Eukaryota</taxon>
        <taxon>Metazoa</taxon>
        <taxon>Chordata</taxon>
        <taxon>Craniata</taxon>
        <taxon>Vertebrata</taxon>
        <taxon>Euteleostomi</taxon>
        <taxon>Mammalia</taxon>
        <taxon>Eutheria</taxon>
        <taxon>Euarchontoglires</taxon>
        <taxon>Primates</taxon>
        <taxon>Haplorrhini</taxon>
        <taxon>Catarrhini</taxon>
        <taxon>Hominidae</taxon>
        <taxon>Homo</taxon>
    </lineage>
</organism>
<keyword id="KW-0221">Differentiation</keyword>
<keyword id="KW-0539">Nucleus</keyword>
<keyword id="KW-0597">Phosphoprotein</keyword>
<keyword id="KW-1267">Proteomics identification</keyword>
<keyword id="KW-1185">Reference proteome</keyword>
<keyword id="KW-0744">Spermatogenesis</keyword>
<keyword id="KW-0804">Transcription</keyword>
<keyword id="KW-0805">Transcription regulation</keyword>
<dbReference type="EMBL" id="AP001931">
    <property type="status" value="NOT_ANNOTATED_CDS"/>
    <property type="molecule type" value="Genomic_DNA"/>
</dbReference>
<dbReference type="EMBL" id="CH471076">
    <property type="protein sequence ID" value="EAW73783.1"/>
    <property type="molecule type" value="Genomic_DNA"/>
</dbReference>
<dbReference type="EMBL" id="BC157853">
    <property type="protein sequence ID" value="AAI57854.1"/>
    <property type="molecule type" value="mRNA"/>
</dbReference>
<dbReference type="EMBL" id="BC157854">
    <property type="protein sequence ID" value="AAI57855.1"/>
    <property type="molecule type" value="mRNA"/>
</dbReference>
<dbReference type="CCDS" id="CCDS44603.1"/>
<dbReference type="RefSeq" id="NP_001138573.1">
    <property type="nucleotide sequence ID" value="NM_001145101.3"/>
</dbReference>
<dbReference type="RefSeq" id="XP_011543514.1">
    <property type="nucleotide sequence ID" value="XM_011545212.2"/>
</dbReference>
<dbReference type="RefSeq" id="XP_016873616.1">
    <property type="nucleotide sequence ID" value="XM_017018127.1"/>
</dbReference>
<dbReference type="RefSeq" id="XP_016873617.1">
    <property type="nucleotide sequence ID" value="XM_017018128.2"/>
</dbReference>
<dbReference type="RefSeq" id="XP_047283361.1">
    <property type="nucleotide sequence ID" value="XM_047427405.1"/>
</dbReference>
<dbReference type="RefSeq" id="XP_054225617.1">
    <property type="nucleotide sequence ID" value="XM_054369642.1"/>
</dbReference>
<dbReference type="RefSeq" id="XP_054225618.1">
    <property type="nucleotide sequence ID" value="XM_054369643.1"/>
</dbReference>
<dbReference type="SMR" id="B2RXH4"/>
<dbReference type="BioGRID" id="568729">
    <property type="interactions" value="4"/>
</dbReference>
<dbReference type="FunCoup" id="B2RXH4">
    <property type="interactions" value="409"/>
</dbReference>
<dbReference type="IntAct" id="B2RXH4">
    <property type="interactions" value="1"/>
</dbReference>
<dbReference type="STRING" id="9606.ENSP00000394472"/>
<dbReference type="GlyGen" id="B2RXH4">
    <property type="glycosylation" value="1 site"/>
</dbReference>
<dbReference type="iPTMnet" id="B2RXH4"/>
<dbReference type="PhosphoSitePlus" id="B2RXH4"/>
<dbReference type="BioMuta" id="BTBD18"/>
<dbReference type="MassIVE" id="B2RXH4"/>
<dbReference type="PaxDb" id="9606-ENSP00000394472"/>
<dbReference type="PeptideAtlas" id="B2RXH4"/>
<dbReference type="Antibodypedia" id="62798">
    <property type="antibodies" value="12 antibodies from 7 providers"/>
</dbReference>
<dbReference type="DNASU" id="643376"/>
<dbReference type="Ensembl" id="ENST00000422652.6">
    <property type="protein sequence ID" value="ENSP00000394472.1"/>
    <property type="gene ID" value="ENSG00000233436.8"/>
</dbReference>
<dbReference type="Ensembl" id="ENST00000436147.3">
    <property type="protein sequence ID" value="ENSP00000397020.2"/>
    <property type="gene ID" value="ENSG00000233436.8"/>
</dbReference>
<dbReference type="Ensembl" id="ENST00000527995.2">
    <property type="protein sequence ID" value="ENSP00000432341.2"/>
    <property type="gene ID" value="ENSG00000233436.8"/>
</dbReference>
<dbReference type="GeneID" id="643376"/>
<dbReference type="KEGG" id="hsa:643376"/>
<dbReference type="MANE-Select" id="ENST00000422652.6">
    <property type="protein sequence ID" value="ENSP00000394472.1"/>
    <property type="RefSeq nucleotide sequence ID" value="NM_001145101.3"/>
    <property type="RefSeq protein sequence ID" value="NP_001138573.1"/>
</dbReference>
<dbReference type="UCSC" id="uc009ymm.4">
    <property type="organism name" value="human"/>
</dbReference>
<dbReference type="AGR" id="HGNC:37214"/>
<dbReference type="CTD" id="643376"/>
<dbReference type="GeneCards" id="BTBD18"/>
<dbReference type="HGNC" id="HGNC:37214">
    <property type="gene designation" value="BTBD18"/>
</dbReference>
<dbReference type="HPA" id="ENSG00000233436">
    <property type="expression patterns" value="Tissue enriched (testis)"/>
</dbReference>
<dbReference type="neXtProt" id="NX_B2RXH4"/>
<dbReference type="OpenTargets" id="ENSG00000233436"/>
<dbReference type="PharmGKB" id="PA165543229"/>
<dbReference type="VEuPathDB" id="HostDB:ENSG00000233436"/>
<dbReference type="eggNOG" id="KOG4441">
    <property type="taxonomic scope" value="Eukaryota"/>
</dbReference>
<dbReference type="GeneTree" id="ENSGT00560000078563"/>
<dbReference type="HOGENOM" id="CLU_380792_0_0_1"/>
<dbReference type="InParanoid" id="B2RXH4"/>
<dbReference type="OMA" id="QQSGVFC"/>
<dbReference type="OrthoDB" id="1925334at2759"/>
<dbReference type="PAN-GO" id="B2RXH4">
    <property type="GO annotations" value="4 GO annotations based on evolutionary models"/>
</dbReference>
<dbReference type="PhylomeDB" id="B2RXH4"/>
<dbReference type="PathwayCommons" id="B2RXH4"/>
<dbReference type="SignaLink" id="B2RXH4"/>
<dbReference type="BioGRID-ORCS" id="643376">
    <property type="hits" value="10 hits in 1178 CRISPR screens"/>
</dbReference>
<dbReference type="ChiTaRS" id="BTBD18">
    <property type="organism name" value="human"/>
</dbReference>
<dbReference type="GenomeRNAi" id="643376"/>
<dbReference type="Pharos" id="B2RXH4">
    <property type="development level" value="Tdark"/>
</dbReference>
<dbReference type="PRO" id="PR:B2RXH4"/>
<dbReference type="Proteomes" id="UP000005640">
    <property type="component" value="Chromosome 11"/>
</dbReference>
<dbReference type="RNAct" id="B2RXH4">
    <property type="molecule type" value="protein"/>
</dbReference>
<dbReference type="Bgee" id="ENSG00000233436">
    <property type="expression patterns" value="Expressed in primordial germ cell in gonad and 70 other cell types or tissues"/>
</dbReference>
<dbReference type="ExpressionAtlas" id="B2RXH4">
    <property type="expression patterns" value="baseline and differential"/>
</dbReference>
<dbReference type="GO" id="GO:0005634">
    <property type="term" value="C:nucleus"/>
    <property type="evidence" value="ECO:0000250"/>
    <property type="project" value="UniProtKB"/>
</dbReference>
<dbReference type="GO" id="GO:0030154">
    <property type="term" value="P:cell differentiation"/>
    <property type="evidence" value="ECO:0007669"/>
    <property type="project" value="UniProtKB-KW"/>
</dbReference>
<dbReference type="GO" id="GO:0007141">
    <property type="term" value="P:male meiosis I"/>
    <property type="evidence" value="ECO:0000250"/>
    <property type="project" value="UniProtKB"/>
</dbReference>
<dbReference type="GO" id="GO:0140541">
    <property type="term" value="P:piRNA transcription"/>
    <property type="evidence" value="ECO:0000250"/>
    <property type="project" value="UniProtKB"/>
</dbReference>
<dbReference type="GO" id="GO:0032968">
    <property type="term" value="P:positive regulation of transcription elongation by RNA polymerase II"/>
    <property type="evidence" value="ECO:0007669"/>
    <property type="project" value="InterPro"/>
</dbReference>
<dbReference type="GO" id="GO:0007283">
    <property type="term" value="P:spermatogenesis"/>
    <property type="evidence" value="ECO:0000250"/>
    <property type="project" value="UniProtKB"/>
</dbReference>
<dbReference type="GO" id="GO:0010526">
    <property type="term" value="P:transposable element silencing"/>
    <property type="evidence" value="ECO:0000250"/>
    <property type="project" value="UniProtKB"/>
</dbReference>
<dbReference type="CDD" id="cd18293">
    <property type="entry name" value="BTB_POZ_BTBD18"/>
    <property type="match status" value="1"/>
</dbReference>
<dbReference type="FunFam" id="3.30.710.10:FF:000126">
    <property type="entry name" value="BTB/POZ domain-containing protein 18"/>
    <property type="match status" value="1"/>
</dbReference>
<dbReference type="Gene3D" id="3.30.710.10">
    <property type="entry name" value="Potassium Channel Kv1.1, Chain A"/>
    <property type="match status" value="1"/>
</dbReference>
<dbReference type="InterPro" id="IPR000210">
    <property type="entry name" value="BTB/POZ_dom"/>
</dbReference>
<dbReference type="InterPro" id="IPR042915">
    <property type="entry name" value="BTBD18"/>
</dbReference>
<dbReference type="InterPro" id="IPR011333">
    <property type="entry name" value="SKP1/BTB/POZ_sf"/>
</dbReference>
<dbReference type="PANTHER" id="PTHR47639">
    <property type="entry name" value="BTB/POZ DOMAIN-CONTAINING PROTEIN 18"/>
    <property type="match status" value="1"/>
</dbReference>
<dbReference type="PANTHER" id="PTHR47639:SF1">
    <property type="entry name" value="BTB_POZ DOMAIN-CONTAINING PROTEIN 18"/>
    <property type="match status" value="1"/>
</dbReference>
<dbReference type="Pfam" id="PF00651">
    <property type="entry name" value="BTB"/>
    <property type="match status" value="1"/>
</dbReference>
<dbReference type="SMART" id="SM00225">
    <property type="entry name" value="BTB"/>
    <property type="match status" value="1"/>
</dbReference>
<dbReference type="SUPFAM" id="SSF54695">
    <property type="entry name" value="POZ domain"/>
    <property type="match status" value="1"/>
</dbReference>
<dbReference type="PROSITE" id="PS50097">
    <property type="entry name" value="BTB"/>
    <property type="match status" value="1"/>
</dbReference>
<accession>B2RXH4</accession>
<evidence type="ECO:0000250" key="1">
    <source>
        <dbReference type="UniProtKB" id="A0A0A6YY25"/>
    </source>
</evidence>
<evidence type="ECO:0000255" key="2">
    <source>
        <dbReference type="PROSITE-ProRule" id="PRU00037"/>
    </source>
</evidence>
<evidence type="ECO:0000256" key="3">
    <source>
        <dbReference type="SAM" id="MobiDB-lite"/>
    </source>
</evidence>
<evidence type="ECO:0000305" key="4"/>
<evidence type="ECO:0000312" key="5">
    <source>
        <dbReference type="HGNC" id="HGNC:37214"/>
    </source>
</evidence>
<name>BTBDI_HUMAN</name>